<reference key="1">
    <citation type="journal article" date="2001" name="Nature">
        <title>The DNA sequence and comparative analysis of human chromosome 20.</title>
        <authorList>
            <person name="Deloukas P."/>
            <person name="Matthews L.H."/>
            <person name="Ashurst J.L."/>
            <person name="Burton J."/>
            <person name="Gilbert J.G.R."/>
            <person name="Jones M."/>
            <person name="Stavrides G."/>
            <person name="Almeida J.P."/>
            <person name="Babbage A.K."/>
            <person name="Bagguley C.L."/>
            <person name="Bailey J."/>
            <person name="Barlow K.F."/>
            <person name="Bates K.N."/>
            <person name="Beard L.M."/>
            <person name="Beare D.M."/>
            <person name="Beasley O.P."/>
            <person name="Bird C.P."/>
            <person name="Blakey S.E."/>
            <person name="Bridgeman A.M."/>
            <person name="Brown A.J."/>
            <person name="Buck D."/>
            <person name="Burrill W.D."/>
            <person name="Butler A.P."/>
            <person name="Carder C."/>
            <person name="Carter N.P."/>
            <person name="Chapman J.C."/>
            <person name="Clamp M."/>
            <person name="Clark G."/>
            <person name="Clark L.N."/>
            <person name="Clark S.Y."/>
            <person name="Clee C.M."/>
            <person name="Clegg S."/>
            <person name="Cobley V.E."/>
            <person name="Collier R.E."/>
            <person name="Connor R.E."/>
            <person name="Corby N.R."/>
            <person name="Coulson A."/>
            <person name="Coville G.J."/>
            <person name="Deadman R."/>
            <person name="Dhami P.D."/>
            <person name="Dunn M."/>
            <person name="Ellington A.G."/>
            <person name="Frankland J.A."/>
            <person name="Fraser A."/>
            <person name="French L."/>
            <person name="Garner P."/>
            <person name="Grafham D.V."/>
            <person name="Griffiths C."/>
            <person name="Griffiths M.N.D."/>
            <person name="Gwilliam R."/>
            <person name="Hall R.E."/>
            <person name="Hammond S."/>
            <person name="Harley J.L."/>
            <person name="Heath P.D."/>
            <person name="Ho S."/>
            <person name="Holden J.L."/>
            <person name="Howden P.J."/>
            <person name="Huckle E."/>
            <person name="Hunt A.R."/>
            <person name="Hunt S.E."/>
            <person name="Jekosch K."/>
            <person name="Johnson C.M."/>
            <person name="Johnson D."/>
            <person name="Kay M.P."/>
            <person name="Kimberley A.M."/>
            <person name="King A."/>
            <person name="Knights A."/>
            <person name="Laird G.K."/>
            <person name="Lawlor S."/>
            <person name="Lehvaeslaiho M.H."/>
            <person name="Leversha M.A."/>
            <person name="Lloyd C."/>
            <person name="Lloyd D.M."/>
            <person name="Lovell J.D."/>
            <person name="Marsh V.L."/>
            <person name="Martin S.L."/>
            <person name="McConnachie L.J."/>
            <person name="McLay K."/>
            <person name="McMurray A.A."/>
            <person name="Milne S.A."/>
            <person name="Mistry D."/>
            <person name="Moore M.J.F."/>
            <person name="Mullikin J.C."/>
            <person name="Nickerson T."/>
            <person name="Oliver K."/>
            <person name="Parker A."/>
            <person name="Patel R."/>
            <person name="Pearce T.A.V."/>
            <person name="Peck A.I."/>
            <person name="Phillimore B.J.C.T."/>
            <person name="Prathalingam S.R."/>
            <person name="Plumb R.W."/>
            <person name="Ramsay H."/>
            <person name="Rice C.M."/>
            <person name="Ross M.T."/>
            <person name="Scott C.E."/>
            <person name="Sehra H.K."/>
            <person name="Shownkeen R."/>
            <person name="Sims S."/>
            <person name="Skuce C.D."/>
            <person name="Smith M.L."/>
            <person name="Soderlund C."/>
            <person name="Steward C.A."/>
            <person name="Sulston J.E."/>
            <person name="Swann R.M."/>
            <person name="Sycamore N."/>
            <person name="Taylor R."/>
            <person name="Tee L."/>
            <person name="Thomas D.W."/>
            <person name="Thorpe A."/>
            <person name="Tracey A."/>
            <person name="Tromans A.C."/>
            <person name="Vaudin M."/>
            <person name="Wall M."/>
            <person name="Wallis J.M."/>
            <person name="Whitehead S.L."/>
            <person name="Whittaker P."/>
            <person name="Willey D.L."/>
            <person name="Williams L."/>
            <person name="Williams S.A."/>
            <person name="Wilming L."/>
            <person name="Wray P.W."/>
            <person name="Hubbard T."/>
            <person name="Durbin R.M."/>
            <person name="Bentley D.R."/>
            <person name="Beck S."/>
            <person name="Rogers J."/>
        </authorList>
    </citation>
    <scope>NUCLEOTIDE SEQUENCE [LARGE SCALE GENOMIC DNA]</scope>
</reference>
<reference key="2">
    <citation type="submission" date="2005-09" db="EMBL/GenBank/DDBJ databases">
        <authorList>
            <person name="Mural R.J."/>
            <person name="Istrail S."/>
            <person name="Sutton G.G."/>
            <person name="Florea L."/>
            <person name="Halpern A.L."/>
            <person name="Mobarry C.M."/>
            <person name="Lippert R."/>
            <person name="Walenz B."/>
            <person name="Shatkay H."/>
            <person name="Dew I."/>
            <person name="Miller J.R."/>
            <person name="Flanigan M.J."/>
            <person name="Edwards N.J."/>
            <person name="Bolanos R."/>
            <person name="Fasulo D."/>
            <person name="Halldorsson B.V."/>
            <person name="Hannenhalli S."/>
            <person name="Turner R."/>
            <person name="Yooseph S."/>
            <person name="Lu F."/>
            <person name="Nusskern D.R."/>
            <person name="Shue B.C."/>
            <person name="Zheng X.H."/>
            <person name="Zhong F."/>
            <person name="Delcher A.L."/>
            <person name="Huson D.H."/>
            <person name="Kravitz S.A."/>
            <person name="Mouchard L."/>
            <person name="Reinert K."/>
            <person name="Remington K.A."/>
            <person name="Clark A.G."/>
            <person name="Waterman M.S."/>
            <person name="Eichler E.E."/>
            <person name="Adams M.D."/>
            <person name="Hunkapiller M.W."/>
            <person name="Myers E.W."/>
            <person name="Venter J.C."/>
        </authorList>
    </citation>
    <scope>NUCLEOTIDE SEQUENCE [LARGE SCALE GENOMIC DNA]</scope>
</reference>
<reference key="3">
    <citation type="journal article" date="2004" name="Genome Res.">
        <title>The status, quality, and expansion of the NIH full-length cDNA project: the Mammalian Gene Collection (MGC).</title>
        <authorList>
            <consortium name="The MGC Project Team"/>
        </authorList>
    </citation>
    <scope>NUCLEOTIDE SEQUENCE [LARGE SCALE MRNA]</scope>
</reference>
<reference key="4">
    <citation type="journal article" date="2002" name="Mech. Dev.">
        <title>Exhaustive identification of human class II basic helix-loop-helix proteins by virtual library screening.</title>
        <authorList>
            <person name="McLellan A.S."/>
            <person name="Langlands K."/>
            <person name="Kealey T."/>
        </authorList>
    </citation>
    <scope>IDENTIFICATION</scope>
</reference>
<sequence>MAELKSLSGDAYLALSHGYAAAAAGLAYGAAREPEAARGYGTPGPGGDLPAAPAPRAPAQAAESSGEQSGDEDDAFEQRRRRRGPGSAADGRRRPREQRSLRLSINARERRRMHDLNDALDGLRAVIPYAHSPSVRKLSKIATLLLAKNYILMQAQALDEMRRLVAFLNQGQGLAAPVNAAPLTPFGQATVCPFSAGAALGPCPDKCAAFSGTPSALCKHCHEKP</sequence>
<name>BHE23_HUMAN</name>
<feature type="chain" id="PRO_0000245526" description="Class E basic helix-loop-helix protein 23">
    <location>
        <begin position="1"/>
        <end position="225"/>
    </location>
</feature>
<feature type="domain" description="bHLH" evidence="2">
    <location>
        <begin position="100"/>
        <end position="154"/>
    </location>
</feature>
<feature type="region of interest" description="Disordered" evidence="3">
    <location>
        <begin position="35"/>
        <end position="104"/>
    </location>
</feature>
<dbReference type="EMBL" id="AL121673">
    <property type="status" value="NOT_ANNOTATED_CDS"/>
    <property type="molecule type" value="Genomic_DNA"/>
</dbReference>
<dbReference type="EMBL" id="CH471077">
    <property type="protein sequence ID" value="EAW75311.1"/>
    <property type="molecule type" value="Genomic_DNA"/>
</dbReference>
<dbReference type="EMBL" id="BC137288">
    <property type="protein sequence ID" value="AAI37289.1"/>
    <property type="molecule type" value="mRNA"/>
</dbReference>
<dbReference type="EMBL" id="BC137308">
    <property type="protein sequence ID" value="AAI37309.1"/>
    <property type="molecule type" value="mRNA"/>
</dbReference>
<dbReference type="EMBL" id="BK000274">
    <property type="protein sequence ID" value="DAA01054.1"/>
    <property type="molecule type" value="mRNA"/>
</dbReference>
<dbReference type="RefSeq" id="NP_542173.2">
    <property type="nucleotide sequence ID" value="NM_080606.3"/>
</dbReference>
<dbReference type="SMR" id="Q8NDY6"/>
<dbReference type="BioGRID" id="126119">
    <property type="interactions" value="21"/>
</dbReference>
<dbReference type="FunCoup" id="Q8NDY6">
    <property type="interactions" value="714"/>
</dbReference>
<dbReference type="IntAct" id="Q8NDY6">
    <property type="interactions" value="20"/>
</dbReference>
<dbReference type="STRING" id="9606.ENSP00000480998"/>
<dbReference type="GlyGen" id="Q8NDY6">
    <property type="glycosylation" value="4 sites, 1 O-linked glycan (3 sites)"/>
</dbReference>
<dbReference type="iPTMnet" id="Q8NDY6"/>
<dbReference type="PhosphoSitePlus" id="Q8NDY6"/>
<dbReference type="BioMuta" id="BHLHE23"/>
<dbReference type="DMDM" id="74751238"/>
<dbReference type="MassIVE" id="Q8NDY6"/>
<dbReference type="PaxDb" id="9606-ENSP00000480998"/>
<dbReference type="PeptideAtlas" id="Q8NDY6"/>
<dbReference type="ProteomicsDB" id="73092"/>
<dbReference type="Antibodypedia" id="29641">
    <property type="antibodies" value="20 antibodies from 12 providers"/>
</dbReference>
<dbReference type="DNASU" id="128408"/>
<dbReference type="Ensembl" id="ENST00000370346.2">
    <property type="protein sequence ID" value="ENSP00000359371.2"/>
    <property type="gene ID" value="ENSG00000125533.6"/>
</dbReference>
<dbReference type="GeneID" id="128408"/>
<dbReference type="KEGG" id="hsa:128408"/>
<dbReference type="UCSC" id="uc061ykj.1">
    <property type="organism name" value="human"/>
</dbReference>
<dbReference type="AGR" id="HGNC:16093"/>
<dbReference type="CTD" id="128408"/>
<dbReference type="DisGeNET" id="128408"/>
<dbReference type="GeneCards" id="BHLHE23"/>
<dbReference type="HGNC" id="HGNC:16093">
    <property type="gene designation" value="BHLHE23"/>
</dbReference>
<dbReference type="HPA" id="ENSG00000125533">
    <property type="expression patterns" value="Not detected"/>
</dbReference>
<dbReference type="MIM" id="609331">
    <property type="type" value="gene"/>
</dbReference>
<dbReference type="neXtProt" id="NX_Q8NDY6"/>
<dbReference type="OpenTargets" id="ENSG00000125533"/>
<dbReference type="PharmGKB" id="PA164716615"/>
<dbReference type="VEuPathDB" id="HostDB:ENSG00000125533"/>
<dbReference type="eggNOG" id="KOG3898">
    <property type="taxonomic scope" value="Eukaryota"/>
</dbReference>
<dbReference type="GeneTree" id="ENSGT00940000162992"/>
<dbReference type="HOGENOM" id="CLU_070971_2_0_1"/>
<dbReference type="InParanoid" id="Q8NDY6"/>
<dbReference type="OrthoDB" id="10011855at2759"/>
<dbReference type="PAN-GO" id="Q8NDY6">
    <property type="GO annotations" value="5 GO annotations based on evolutionary models"/>
</dbReference>
<dbReference type="PhylomeDB" id="Q8NDY6"/>
<dbReference type="TreeFam" id="TF322733"/>
<dbReference type="PathwayCommons" id="Q8NDY6"/>
<dbReference type="SignaLink" id="Q8NDY6"/>
<dbReference type="BioGRID-ORCS" id="128408">
    <property type="hits" value="5 hits in 358 CRISPR screens"/>
</dbReference>
<dbReference type="ChiTaRS" id="BHLHE23">
    <property type="organism name" value="human"/>
</dbReference>
<dbReference type="GenomeRNAi" id="128408"/>
<dbReference type="Pharos" id="Q8NDY6">
    <property type="development level" value="Tdark"/>
</dbReference>
<dbReference type="PRO" id="PR:Q8NDY6"/>
<dbReference type="Proteomes" id="UP000005640">
    <property type="component" value="Chromosome 20"/>
</dbReference>
<dbReference type="RNAct" id="Q8NDY6">
    <property type="molecule type" value="protein"/>
</dbReference>
<dbReference type="Bgee" id="ENSG00000125533">
    <property type="expression patterns" value="Expressed in ganglionic eminence and 3 other cell types or tissues"/>
</dbReference>
<dbReference type="ExpressionAtlas" id="Q8NDY6">
    <property type="expression patterns" value="baseline and differential"/>
</dbReference>
<dbReference type="GO" id="GO:0000785">
    <property type="term" value="C:chromatin"/>
    <property type="evidence" value="ECO:0000247"/>
    <property type="project" value="NTNU_SB"/>
</dbReference>
<dbReference type="GO" id="GO:0005634">
    <property type="term" value="C:nucleus"/>
    <property type="evidence" value="ECO:0000318"/>
    <property type="project" value="GO_Central"/>
</dbReference>
<dbReference type="GO" id="GO:0000981">
    <property type="term" value="F:DNA-binding transcription factor activity, RNA polymerase II-specific"/>
    <property type="evidence" value="ECO:0000247"/>
    <property type="project" value="NTNU_SB"/>
</dbReference>
<dbReference type="GO" id="GO:0070888">
    <property type="term" value="F:E-box binding"/>
    <property type="evidence" value="ECO:0000318"/>
    <property type="project" value="GO_Central"/>
</dbReference>
<dbReference type="GO" id="GO:0046983">
    <property type="term" value="F:protein dimerization activity"/>
    <property type="evidence" value="ECO:0007669"/>
    <property type="project" value="InterPro"/>
</dbReference>
<dbReference type="GO" id="GO:1990837">
    <property type="term" value="F:sequence-specific double-stranded DNA binding"/>
    <property type="evidence" value="ECO:0000314"/>
    <property type="project" value="ARUK-UCL"/>
</dbReference>
<dbReference type="GO" id="GO:0061564">
    <property type="term" value="P:axon development"/>
    <property type="evidence" value="ECO:0000318"/>
    <property type="project" value="GO_Central"/>
</dbReference>
<dbReference type="GO" id="GO:0045944">
    <property type="term" value="P:positive regulation of transcription by RNA polymerase II"/>
    <property type="evidence" value="ECO:0000318"/>
    <property type="project" value="GO_Central"/>
</dbReference>
<dbReference type="GO" id="GO:0007423">
    <property type="term" value="P:sensory organ development"/>
    <property type="evidence" value="ECO:0000318"/>
    <property type="project" value="GO_Central"/>
</dbReference>
<dbReference type="FunFam" id="4.10.280.10:FF:000026">
    <property type="entry name" value="Basic helix-loop-helix family, member e23"/>
    <property type="match status" value="1"/>
</dbReference>
<dbReference type="Gene3D" id="4.10.280.10">
    <property type="entry name" value="Helix-loop-helix DNA-binding domain"/>
    <property type="match status" value="1"/>
</dbReference>
<dbReference type="InterPro" id="IPR011598">
    <property type="entry name" value="bHLH_dom"/>
</dbReference>
<dbReference type="InterPro" id="IPR050359">
    <property type="entry name" value="bHLH_transcription_factors"/>
</dbReference>
<dbReference type="InterPro" id="IPR036638">
    <property type="entry name" value="HLH_DNA-bd_sf"/>
</dbReference>
<dbReference type="PANTHER" id="PTHR19290">
    <property type="entry name" value="BASIC HELIX-LOOP-HELIX PROTEIN NEUROGENIN-RELATED"/>
    <property type="match status" value="1"/>
</dbReference>
<dbReference type="PANTHER" id="PTHR19290:SF53">
    <property type="entry name" value="CLASS E BASIC HELIX-LOOP-HELIX PROTEIN 23"/>
    <property type="match status" value="1"/>
</dbReference>
<dbReference type="Pfam" id="PF00010">
    <property type="entry name" value="HLH"/>
    <property type="match status" value="1"/>
</dbReference>
<dbReference type="SMART" id="SM00353">
    <property type="entry name" value="HLH"/>
    <property type="match status" value="1"/>
</dbReference>
<dbReference type="SUPFAM" id="SSF47459">
    <property type="entry name" value="HLH, helix-loop-helix DNA-binding domain"/>
    <property type="match status" value="1"/>
</dbReference>
<dbReference type="PROSITE" id="PS50888">
    <property type="entry name" value="BHLH"/>
    <property type="match status" value="1"/>
</dbReference>
<proteinExistence type="evidence at protein level"/>
<accession>Q8NDY6</accession>
<accession>B2RP69</accession>
<keyword id="KW-0238">DNA-binding</keyword>
<keyword id="KW-0539">Nucleus</keyword>
<keyword id="KW-1267">Proteomics identification</keyword>
<keyword id="KW-1185">Reference proteome</keyword>
<keyword id="KW-0804">Transcription</keyword>
<keyword id="KW-0805">Transcription regulation</keyword>
<comment type="function">
    <text evidence="1">May function as transcriptional repressor. May modulate the expression of genes required for the differentiation and/or maintenance of pancreatic and neuronal cell types. May be important for rod bipolar cell maturation (By similarity).</text>
</comment>
<comment type="interaction">
    <interactant intactId="EBI-12144263">
        <id>Q8NDY6</id>
    </interactant>
    <interactant intactId="EBI-347451">
        <id>P19784</id>
        <label>CSNK2A2</label>
    </interactant>
    <organismsDiffer>false</organismsDiffer>
    <experiments>3</experiments>
</comment>
<comment type="interaction">
    <interactant intactId="EBI-12144263">
        <id>Q8NDY6</id>
    </interactant>
    <interactant intactId="EBI-1047093">
        <id>O76011</id>
        <label>KRT34</label>
    </interactant>
    <organismsDiffer>false</organismsDiffer>
    <experiments>3</experiments>
</comment>
<comment type="subcellular location">
    <subcellularLocation>
        <location evidence="4">Nucleus</location>
    </subcellularLocation>
</comment>
<protein>
    <recommendedName>
        <fullName>Class E basic helix-loop-helix protein 23</fullName>
        <shortName>bHLHe23</shortName>
    </recommendedName>
    <alternativeName>
        <fullName>Class B basic helix-loop-helix protein 4</fullName>
        <shortName>bHLHb4</shortName>
    </alternativeName>
</protein>
<organism>
    <name type="scientific">Homo sapiens</name>
    <name type="common">Human</name>
    <dbReference type="NCBI Taxonomy" id="9606"/>
    <lineage>
        <taxon>Eukaryota</taxon>
        <taxon>Metazoa</taxon>
        <taxon>Chordata</taxon>
        <taxon>Craniata</taxon>
        <taxon>Vertebrata</taxon>
        <taxon>Euteleostomi</taxon>
        <taxon>Mammalia</taxon>
        <taxon>Eutheria</taxon>
        <taxon>Euarchontoglires</taxon>
        <taxon>Primates</taxon>
        <taxon>Haplorrhini</taxon>
        <taxon>Catarrhini</taxon>
        <taxon>Hominidae</taxon>
        <taxon>Homo</taxon>
    </lineage>
</organism>
<gene>
    <name type="primary">BHLHE23</name>
    <name type="synonym">BHLHB4</name>
</gene>
<evidence type="ECO:0000250" key="1"/>
<evidence type="ECO:0000255" key="2">
    <source>
        <dbReference type="PROSITE-ProRule" id="PRU00981"/>
    </source>
</evidence>
<evidence type="ECO:0000256" key="3">
    <source>
        <dbReference type="SAM" id="MobiDB-lite"/>
    </source>
</evidence>
<evidence type="ECO:0000305" key="4"/>